<proteinExistence type="inferred from homology"/>
<name>DAPH_BACCQ</name>
<reference key="1">
    <citation type="journal article" date="2009" name="J. Bacteriol.">
        <title>Complete genome sequence of the extremophilic Bacillus cereus strain Q1 with industrial applications.</title>
        <authorList>
            <person name="Xiong Z."/>
            <person name="Jiang Y."/>
            <person name="Qi D."/>
            <person name="Lu H."/>
            <person name="Yang F."/>
            <person name="Yang J."/>
            <person name="Chen L."/>
            <person name="Sun L."/>
            <person name="Xu X."/>
            <person name="Xue Y."/>
            <person name="Zhu Y."/>
            <person name="Jin Q."/>
        </authorList>
    </citation>
    <scope>NUCLEOTIDE SEQUENCE [LARGE SCALE GENOMIC DNA]</scope>
    <source>
        <strain>Q1</strain>
    </source>
</reference>
<dbReference type="EC" id="2.3.1.89" evidence="1"/>
<dbReference type="EMBL" id="CP000227">
    <property type="protein sequence ID" value="ACM14198.1"/>
    <property type="molecule type" value="Genomic_DNA"/>
</dbReference>
<dbReference type="SMR" id="B9IW61"/>
<dbReference type="KEGG" id="bcq:BCQ_3770"/>
<dbReference type="HOGENOM" id="CLU_103751_0_0_9"/>
<dbReference type="UniPathway" id="UPA00034">
    <property type="reaction ID" value="UER00022"/>
</dbReference>
<dbReference type="Proteomes" id="UP000000441">
    <property type="component" value="Chromosome"/>
</dbReference>
<dbReference type="GO" id="GO:0047200">
    <property type="term" value="F:tetrahydrodipicolinate N-acetyltransferase activity"/>
    <property type="evidence" value="ECO:0007669"/>
    <property type="project" value="UniProtKB-EC"/>
</dbReference>
<dbReference type="GO" id="GO:0019877">
    <property type="term" value="P:diaminopimelate biosynthetic process"/>
    <property type="evidence" value="ECO:0007669"/>
    <property type="project" value="UniProtKB-UniRule"/>
</dbReference>
<dbReference type="GO" id="GO:0009089">
    <property type="term" value="P:lysine biosynthetic process via diaminopimelate"/>
    <property type="evidence" value="ECO:0007669"/>
    <property type="project" value="UniProtKB-UniRule"/>
</dbReference>
<dbReference type="CDD" id="cd03350">
    <property type="entry name" value="LbH_THP_succinylT"/>
    <property type="match status" value="1"/>
</dbReference>
<dbReference type="Gene3D" id="2.160.10.10">
    <property type="entry name" value="Hexapeptide repeat proteins"/>
    <property type="match status" value="1"/>
</dbReference>
<dbReference type="Gene3D" id="3.30.70.250">
    <property type="entry name" value="Malonyl-CoA ACP transacylase, ACP-binding"/>
    <property type="match status" value="1"/>
</dbReference>
<dbReference type="HAMAP" id="MF_01691">
    <property type="entry name" value="DapH"/>
    <property type="match status" value="1"/>
</dbReference>
<dbReference type="InterPro" id="IPR019873">
    <property type="entry name" value="DapH"/>
</dbReference>
<dbReference type="InterPro" id="IPR013710">
    <property type="entry name" value="DapH_N"/>
</dbReference>
<dbReference type="InterPro" id="IPR001451">
    <property type="entry name" value="Hexapep"/>
</dbReference>
<dbReference type="InterPro" id="IPR018357">
    <property type="entry name" value="Hexapep_transf_CS"/>
</dbReference>
<dbReference type="InterPro" id="IPR050179">
    <property type="entry name" value="Trans_hexapeptide_repeat"/>
</dbReference>
<dbReference type="InterPro" id="IPR011004">
    <property type="entry name" value="Trimer_LpxA-like_sf"/>
</dbReference>
<dbReference type="NCBIfam" id="TIGR03532">
    <property type="entry name" value="DapD_Ac"/>
    <property type="match status" value="1"/>
</dbReference>
<dbReference type="PANTHER" id="PTHR43300:SF10">
    <property type="entry name" value="2,3,4,5-TETRAHYDROPYRIDINE-2,6-DICARBOXYLATE N-ACETYLTRANSFERASE"/>
    <property type="match status" value="1"/>
</dbReference>
<dbReference type="PANTHER" id="PTHR43300">
    <property type="entry name" value="ACETYLTRANSFERASE"/>
    <property type="match status" value="1"/>
</dbReference>
<dbReference type="Pfam" id="PF08503">
    <property type="entry name" value="DapH_N"/>
    <property type="match status" value="1"/>
</dbReference>
<dbReference type="Pfam" id="PF00132">
    <property type="entry name" value="Hexapep"/>
    <property type="match status" value="1"/>
</dbReference>
<dbReference type="Pfam" id="PF14602">
    <property type="entry name" value="Hexapep_2"/>
    <property type="match status" value="1"/>
</dbReference>
<dbReference type="SUPFAM" id="SSF51161">
    <property type="entry name" value="Trimeric LpxA-like enzymes"/>
    <property type="match status" value="1"/>
</dbReference>
<dbReference type="PROSITE" id="PS00101">
    <property type="entry name" value="HEXAPEP_TRANSFERASES"/>
    <property type="match status" value="1"/>
</dbReference>
<organism>
    <name type="scientific">Bacillus cereus (strain Q1)</name>
    <dbReference type="NCBI Taxonomy" id="361100"/>
    <lineage>
        <taxon>Bacteria</taxon>
        <taxon>Bacillati</taxon>
        <taxon>Bacillota</taxon>
        <taxon>Bacilli</taxon>
        <taxon>Bacillales</taxon>
        <taxon>Bacillaceae</taxon>
        <taxon>Bacillus</taxon>
        <taxon>Bacillus cereus group</taxon>
    </lineage>
</organism>
<protein>
    <recommendedName>
        <fullName evidence="1">2,3,4,5-tetrahydropyridine-2,6-dicarboxylate N-acetyltransferase</fullName>
        <ecNumber evidence="1">2.3.1.89</ecNumber>
    </recommendedName>
    <alternativeName>
        <fullName evidence="1">Tetrahydrodipicolinate N-acetyltransferase</fullName>
        <shortName evidence="1">THP acetyltransferase</shortName>
        <shortName evidence="1">Tetrahydropicolinate acetylase</shortName>
    </alternativeName>
</protein>
<feature type="chain" id="PRO_0000376632" description="2,3,4,5-tetrahydropyridine-2,6-dicarboxylate N-acetyltransferase">
    <location>
        <begin position="1"/>
        <end position="240"/>
    </location>
</feature>
<sequence length="240" mass="25704">MKMMDANEIISFIQKSEKKTPVKVYIKGDLKEVTFPETVQAFVNKKSGVLFGEWSEIKTILDENSKYIVDYVVENDRRNSAIPMLDLKGIKARIEPGAIIRDHVEIGDNAVIMMNATINIGAVIGEGSMIDMNAVLGGRATVGKNCHVGAGAVLAGVIEPPSAKPVIVEDDVVIGANVVVLEGVTVGKGAVVAAGAVVTEDVPPYTVVAGTPARVIKEIDEKTKAKTEIKQELRQLNPEK</sequence>
<accession>B9IW61</accession>
<evidence type="ECO:0000255" key="1">
    <source>
        <dbReference type="HAMAP-Rule" id="MF_01691"/>
    </source>
</evidence>
<keyword id="KW-0012">Acyltransferase</keyword>
<keyword id="KW-0028">Amino-acid biosynthesis</keyword>
<keyword id="KW-0220">Diaminopimelate biosynthesis</keyword>
<keyword id="KW-0457">Lysine biosynthesis</keyword>
<keyword id="KW-0677">Repeat</keyword>
<keyword id="KW-0808">Transferase</keyword>
<gene>
    <name evidence="1" type="primary">dapH</name>
    <name type="ordered locus">BCQ_3770</name>
</gene>
<comment type="function">
    <text evidence="1">Catalyzes the transfer of an acetyl group from acetyl-CoA to tetrahydrodipicolinate.</text>
</comment>
<comment type="catalytic activity">
    <reaction evidence="1">
        <text>(S)-2,3,4,5-tetrahydrodipicolinate + acetyl-CoA + H2O = L-2-acetamido-6-oxoheptanedioate + CoA</text>
        <dbReference type="Rhea" id="RHEA:13085"/>
        <dbReference type="ChEBI" id="CHEBI:15377"/>
        <dbReference type="ChEBI" id="CHEBI:16845"/>
        <dbReference type="ChEBI" id="CHEBI:57287"/>
        <dbReference type="ChEBI" id="CHEBI:57288"/>
        <dbReference type="ChEBI" id="CHEBI:58117"/>
        <dbReference type="EC" id="2.3.1.89"/>
    </reaction>
</comment>
<comment type="pathway">
    <text evidence="1">Amino-acid biosynthesis; L-lysine biosynthesis via DAP pathway; LL-2,6-diaminopimelate from (S)-tetrahydrodipicolinate (acetylase route): step 1/3.</text>
</comment>
<comment type="similarity">
    <text evidence="1">Belongs to the transferase hexapeptide repeat family. DapH subfamily.</text>
</comment>